<accession>Q202J4</accession>
<dbReference type="EC" id="4.6.1.-" evidence="5"/>
<dbReference type="EMBL" id="DQ411855">
    <property type="protein sequence ID" value="ABD73957.1"/>
    <property type="molecule type" value="mRNA"/>
</dbReference>
<dbReference type="SMR" id="Q202J4"/>
<dbReference type="VEuPathDB" id="VectorBase:ISCI021251"/>
<dbReference type="VEuPathDB" id="VectorBase:ISCP_020926"/>
<dbReference type="VEuPathDB" id="VectorBase:ISCW021251"/>
<dbReference type="InParanoid" id="Q202J4"/>
<dbReference type="OrthoDB" id="1058301at2759"/>
<dbReference type="BRENDA" id="3.1.4.41">
    <property type="organism ID" value="10611"/>
</dbReference>
<dbReference type="Proteomes" id="UP000001555">
    <property type="component" value="Unplaced"/>
</dbReference>
<dbReference type="GO" id="GO:0005576">
    <property type="term" value="C:extracellular region"/>
    <property type="evidence" value="ECO:0007669"/>
    <property type="project" value="UniProtKB-SubCell"/>
</dbReference>
<dbReference type="GO" id="GO:0016829">
    <property type="term" value="F:lyase activity"/>
    <property type="evidence" value="ECO:0007669"/>
    <property type="project" value="UniProtKB-KW"/>
</dbReference>
<dbReference type="GO" id="GO:0046872">
    <property type="term" value="F:metal ion binding"/>
    <property type="evidence" value="ECO:0007669"/>
    <property type="project" value="UniProtKB-KW"/>
</dbReference>
<dbReference type="GO" id="GO:0008081">
    <property type="term" value="F:phosphoric diester hydrolase activity"/>
    <property type="evidence" value="ECO:0007669"/>
    <property type="project" value="InterPro"/>
</dbReference>
<dbReference type="GO" id="GO:0090729">
    <property type="term" value="F:toxin activity"/>
    <property type="evidence" value="ECO:0007669"/>
    <property type="project" value="UniProtKB-KW"/>
</dbReference>
<dbReference type="GO" id="GO:0031640">
    <property type="term" value="P:killing of cells of another organism"/>
    <property type="evidence" value="ECO:0007669"/>
    <property type="project" value="UniProtKB-KW"/>
</dbReference>
<dbReference type="GO" id="GO:0016042">
    <property type="term" value="P:lipid catabolic process"/>
    <property type="evidence" value="ECO:0007669"/>
    <property type="project" value="UniProtKB-KW"/>
</dbReference>
<dbReference type="CDD" id="cd08576">
    <property type="entry name" value="GDPD_like_SMaseD_PLD"/>
    <property type="match status" value="1"/>
</dbReference>
<dbReference type="Gene3D" id="3.20.20.190">
    <property type="entry name" value="Phosphatidylinositol (PI) phosphodiesterase"/>
    <property type="match status" value="1"/>
</dbReference>
<dbReference type="InterPro" id="IPR017946">
    <property type="entry name" value="PLC-like_Pdiesterase_TIM-brl"/>
</dbReference>
<dbReference type="SUPFAM" id="SSF51695">
    <property type="entry name" value="PLC-like phosphodiesterases"/>
    <property type="match status" value="1"/>
</dbReference>
<proteinExistence type="evidence at transcript level"/>
<sequence length="364" mass="41567">MIRIFALITALAITVKCQDDRRPFYVIGHMVNSIPQVSQFLELGTNAIESDVEFSENGTALRTFHGLPCDCLRRCKESADIVDYFQYIRNVTGFRHSEYSEKLLLVFLDLKVSKLPPESKYAAGVDIATKLVLHLWDGVPFYDAMNVLLSIGRASDMAVLTGAIDTIIGFDPSLSLFNHVGFDVGLNDKLENIAKMYERLGVNGHRWQGDGITNCLVNLRSPLRLKETISYRDTNKRESYVDKVYYWTVDKVATIRKTIRRGVDAIITNRPKRVTGVLEEDEFKKTVRPATYRDDPWMRLQSKTTGRGNELDSDMDEMGDEASEFDFEPFSYPLSPRRPLSSRSPAIRDSYNVWPQYNPLSPFY</sequence>
<evidence type="ECO:0000250" key="1"/>
<evidence type="ECO:0000250" key="2">
    <source>
        <dbReference type="UniProtKB" id="A0A0D4WTV1"/>
    </source>
</evidence>
<evidence type="ECO:0000250" key="3">
    <source>
        <dbReference type="UniProtKB" id="A0A0D4WV12"/>
    </source>
</evidence>
<evidence type="ECO:0000250" key="4">
    <source>
        <dbReference type="UniProtKB" id="P0CE80"/>
    </source>
</evidence>
<evidence type="ECO:0000250" key="5">
    <source>
        <dbReference type="UniProtKB" id="Q4ZFU2"/>
    </source>
</evidence>
<evidence type="ECO:0000250" key="6">
    <source>
        <dbReference type="UniProtKB" id="Q8I914"/>
    </source>
</evidence>
<evidence type="ECO:0000255" key="7"/>
<evidence type="ECO:0000305" key="8"/>
<evidence type="ECO:0000305" key="9">
    <source ref="1"/>
</evidence>
<evidence type="ECO:0000312" key="10">
    <source>
        <dbReference type="EMBL" id="ABD73957.1"/>
    </source>
</evidence>
<name>DTSPH_IXOSC</name>
<feature type="signal peptide" evidence="7">
    <location>
        <begin position="1"/>
        <end position="17"/>
    </location>
</feature>
<feature type="chain" id="PRO_0000279548" description="Dermonecrotic toxin SPH">
    <location>
        <begin position="18"/>
        <end position="364"/>
    </location>
</feature>
<feature type="active site" description="Nucleophile" evidence="6">
    <location>
        <position position="29"/>
    </location>
</feature>
<feature type="active site" evidence="6">
    <location>
        <position position="65"/>
    </location>
</feature>
<feature type="binding site" evidence="6">
    <location>
        <position position="49"/>
    </location>
    <ligand>
        <name>Mg(2+)</name>
        <dbReference type="ChEBI" id="CHEBI:18420"/>
    </ligand>
</feature>
<feature type="binding site" evidence="6">
    <location>
        <position position="51"/>
    </location>
    <ligand>
        <name>Mg(2+)</name>
        <dbReference type="ChEBI" id="CHEBI:18420"/>
    </ligand>
</feature>
<feature type="binding site" evidence="6">
    <location>
        <position position="109"/>
    </location>
    <ligand>
        <name>Mg(2+)</name>
        <dbReference type="ChEBI" id="CHEBI:18420"/>
    </ligand>
</feature>
<feature type="disulfide bond" evidence="1">
    <location>
        <begin position="69"/>
        <end position="75"/>
    </location>
</feature>
<feature type="disulfide bond" evidence="7">
    <location>
        <begin position="71"/>
        <end position="215"/>
    </location>
</feature>
<comment type="function">
    <text evidence="2 4">Dermonecrotic toxins cleave the phosphodiester linkage between the phosphate and headgroup of certain phospholipids (sphingolipid and lysolipid substrates), forming an alcohol (often choline) and a cyclic phosphate (By similarity). Acts on sphingomyelin (SM) (By similarity). It may also act on ceramide phosphoethanolamine (CPE), lysophosphatidylcholine (LPC) and lysophosphatidylethanolamine (LPE), but not on lysophosphatidylserine (LPS), and lysophosphatidylglycerol (LPG) (By similarity). It acts by transphosphatidylation, releasing exclusively cyclic phosphate products as second products (By similarity). Induces dermonecrosis, hemolysis, increased vascular permeability, edema, inflammatory response, and platelet aggregation (By similarity).</text>
</comment>
<comment type="catalytic activity">
    <reaction evidence="2">
        <text>an N-(acyl)-sphingosylphosphocholine = an N-(acyl)-sphingosyl-1,3-cyclic phosphate + choline</text>
        <dbReference type="Rhea" id="RHEA:60652"/>
        <dbReference type="ChEBI" id="CHEBI:15354"/>
        <dbReference type="ChEBI" id="CHEBI:64583"/>
        <dbReference type="ChEBI" id="CHEBI:143892"/>
    </reaction>
</comment>
<comment type="catalytic activity">
    <reaction evidence="2">
        <text>an N-(acyl)-sphingosylphosphoethanolamine = an N-(acyl)-sphingosyl-1,3-cyclic phosphate + ethanolamine</text>
        <dbReference type="Rhea" id="RHEA:60648"/>
        <dbReference type="ChEBI" id="CHEBI:57603"/>
        <dbReference type="ChEBI" id="CHEBI:143891"/>
        <dbReference type="ChEBI" id="CHEBI:143892"/>
    </reaction>
</comment>
<comment type="catalytic activity">
    <reaction evidence="2">
        <text>a 1-acyl-sn-glycero-3-phosphocholine = a 1-acyl-sn-glycero-2,3-cyclic phosphate + choline</text>
        <dbReference type="Rhea" id="RHEA:60700"/>
        <dbReference type="ChEBI" id="CHEBI:15354"/>
        <dbReference type="ChEBI" id="CHEBI:58168"/>
        <dbReference type="ChEBI" id="CHEBI:143947"/>
    </reaction>
</comment>
<comment type="catalytic activity">
    <reaction evidence="2">
        <text>a 1-acyl-sn-glycero-3-phosphoethanolamine = a 1-acyl-sn-glycero-2,3-cyclic phosphate + ethanolamine</text>
        <dbReference type="Rhea" id="RHEA:60704"/>
        <dbReference type="ChEBI" id="CHEBI:57603"/>
        <dbReference type="ChEBI" id="CHEBI:64381"/>
        <dbReference type="ChEBI" id="CHEBI:143947"/>
    </reaction>
</comment>
<comment type="cofactor">
    <cofactor evidence="1">
        <name>Mg(2+)</name>
        <dbReference type="ChEBI" id="CHEBI:18420"/>
    </cofactor>
    <text evidence="1">Binds 1 Mg(2+) ion per subunit.</text>
</comment>
<comment type="subcellular location">
    <subcellularLocation>
        <location evidence="9">Secreted</location>
    </subcellularLocation>
</comment>
<comment type="tissue specificity">
    <text evidence="9">Expressed in salivary glands.</text>
</comment>
<comment type="similarity">
    <text evidence="8">Belongs to the arthropod phospholipase D family.</text>
</comment>
<comment type="caution">
    <text evidence="2 3 5">The most common activity assay for dermonecrotic toxins detects enzymatic activity by monitoring choline release from substrate. Liberation of choline from sphingomyelin (SM) or lysophosphatidylcholine (LPC) is commonly assumed to result from substrate hydrolysis, giving either ceramide-1-phosphate (C1P) or lysophosphatidic acid (LPA), respectively, as a second product. However, two studies from Lajoie and colleagues (2013 and 2015) report the observation of exclusive formation of cyclic phosphate products as second products, resulting from intramolecular transphosphatidylation. Cyclic phosphates have vastly different biological properties from their monoester counterparts, and they may be relevant to the pathology of brown spider envenomation.</text>
</comment>
<gene>
    <name type="primary">SPH</name>
</gene>
<protein>
    <recommendedName>
        <fullName evidence="10">Dermonecrotic toxin SPH</fullName>
        <ecNumber evidence="5">4.6.1.-</ecNumber>
    </recommendedName>
    <alternativeName>
        <fullName>Phospholipase D</fullName>
        <shortName>PLD</shortName>
    </alternativeName>
    <alternativeName>
        <fullName>Sphingomyelin phosphodiesterase D</fullName>
        <shortName>SMD</shortName>
        <shortName>SMase D</shortName>
        <shortName>Sphingomyelinase D</shortName>
    </alternativeName>
</protein>
<organism>
    <name type="scientific">Ixodes scapularis</name>
    <name type="common">Black-legged tick</name>
    <name type="synonym">Deer tick</name>
    <dbReference type="NCBI Taxonomy" id="6945"/>
    <lineage>
        <taxon>Eukaryota</taxon>
        <taxon>Metazoa</taxon>
        <taxon>Ecdysozoa</taxon>
        <taxon>Arthropoda</taxon>
        <taxon>Chelicerata</taxon>
        <taxon>Arachnida</taxon>
        <taxon>Acari</taxon>
        <taxon>Parasitiformes</taxon>
        <taxon>Ixodida</taxon>
        <taxon>Ixodoidea</taxon>
        <taxon>Ixodidae</taxon>
        <taxon>Ixodinae</taxon>
        <taxon>Ixodes</taxon>
    </lineage>
</organism>
<keyword id="KW-0204">Cytolysis</keyword>
<keyword id="KW-1061">Dermonecrotic toxin</keyword>
<keyword id="KW-1015">Disulfide bond</keyword>
<keyword id="KW-0354">Hemolysis</keyword>
<keyword id="KW-0442">Lipid degradation</keyword>
<keyword id="KW-0443">Lipid metabolism</keyword>
<keyword id="KW-0456">Lyase</keyword>
<keyword id="KW-0460">Magnesium</keyword>
<keyword id="KW-0479">Metal-binding</keyword>
<keyword id="KW-1185">Reference proteome</keyword>
<keyword id="KW-0964">Secreted</keyword>
<keyword id="KW-0732">Signal</keyword>
<keyword id="KW-0800">Toxin</keyword>
<keyword id="KW-0865">Zymogen</keyword>
<reference key="1">
    <citation type="submission" date="2006-02" db="EMBL/GenBank/DDBJ databases">
        <title>Functional characterization of an Ixodes scapularis (Acari: Ixodidae) salivary gland protein with sphingomyelinase-like activity.</title>
        <authorList>
            <person name="Alarcon-Chaidez F.J."/>
            <person name="Lambson B."/>
            <person name="Wikel S.K."/>
        </authorList>
    </citation>
    <scope>NUCLEOTIDE SEQUENCE [MRNA]</scope>
    <source>
        <tissue>Salivary gland</tissue>
    </source>
</reference>